<organism>
    <name type="scientific">Mesorhizobium japonicum (strain LMG 29417 / CECT 9101 / MAFF 303099)</name>
    <name type="common">Mesorhizobium loti (strain MAFF 303099)</name>
    <dbReference type="NCBI Taxonomy" id="266835"/>
    <lineage>
        <taxon>Bacteria</taxon>
        <taxon>Pseudomonadati</taxon>
        <taxon>Pseudomonadota</taxon>
        <taxon>Alphaproteobacteria</taxon>
        <taxon>Hyphomicrobiales</taxon>
        <taxon>Phyllobacteriaceae</taxon>
        <taxon>Mesorhizobium</taxon>
    </lineage>
</organism>
<sequence length="353" mass="39201">MTSAIAVDPKAAKPVGVTAGHAPAGAGKVGVLLVNLGTPDGTEFKPMWRYLREFLSDPRVIELNKAIWYPILYGLVLTTRPKKSGANYARIWNQERNESPLRTYTRAQSEKLAEALGDLPDVTVDWAMRYGNPSTASVAERLVAQGCDRILSFPLYPQYSATTTATANDQLFRALMKLRRAPAIRSVPPYYAEPVYIEALASSIERHLATLDFEPEVVITSYHGIPKPYSDKGDPYQAHCLETTRLLREKLGWDEKKLITTFQSRFGAQEWLQPYTDKTVEKLGKDGVKSIAIVNPGFSVDCIETLDEIGREAAETFHHAGGKNFAHIPCLNDSAEGMTVIEAMVRRELSGWV</sequence>
<feature type="chain" id="PRO_0000175188" description="Ferrochelatase">
    <location>
        <begin position="1"/>
        <end position="353"/>
    </location>
</feature>
<feature type="binding site" evidence="1">
    <location>
        <position position="223"/>
    </location>
    <ligand>
        <name>Fe cation</name>
        <dbReference type="ChEBI" id="CHEBI:24875"/>
    </ligand>
</feature>
<feature type="binding site" evidence="1">
    <location>
        <position position="304"/>
    </location>
    <ligand>
        <name>Fe cation</name>
        <dbReference type="ChEBI" id="CHEBI:24875"/>
    </ligand>
</feature>
<comment type="function">
    <text evidence="1">Catalyzes the ferrous insertion into protoporphyrin IX.</text>
</comment>
<comment type="catalytic activity">
    <reaction evidence="1">
        <text>heme b + 2 H(+) = protoporphyrin IX + Fe(2+)</text>
        <dbReference type="Rhea" id="RHEA:22584"/>
        <dbReference type="ChEBI" id="CHEBI:15378"/>
        <dbReference type="ChEBI" id="CHEBI:29033"/>
        <dbReference type="ChEBI" id="CHEBI:57306"/>
        <dbReference type="ChEBI" id="CHEBI:60344"/>
        <dbReference type="EC" id="4.98.1.1"/>
    </reaction>
</comment>
<comment type="pathway">
    <text evidence="1">Porphyrin-containing compound metabolism; protoheme biosynthesis; protoheme from protoporphyrin-IX: step 1/1.</text>
</comment>
<comment type="subcellular location">
    <subcellularLocation>
        <location evidence="1">Cytoplasm</location>
    </subcellularLocation>
</comment>
<comment type="similarity">
    <text evidence="1">Belongs to the ferrochelatase family.</text>
</comment>
<accession>Q98H61</accession>
<name>HEMH_RHILO</name>
<evidence type="ECO:0000255" key="1">
    <source>
        <dbReference type="HAMAP-Rule" id="MF_00323"/>
    </source>
</evidence>
<keyword id="KW-0963">Cytoplasm</keyword>
<keyword id="KW-0350">Heme biosynthesis</keyword>
<keyword id="KW-0408">Iron</keyword>
<keyword id="KW-0456">Lyase</keyword>
<keyword id="KW-0479">Metal-binding</keyword>
<keyword id="KW-0627">Porphyrin biosynthesis</keyword>
<gene>
    <name evidence="1" type="primary">hemH</name>
    <name type="ordered locus">mlr3019</name>
</gene>
<protein>
    <recommendedName>
        <fullName evidence="1">Ferrochelatase</fullName>
        <ecNumber evidence="1">4.98.1.1</ecNumber>
    </recommendedName>
    <alternativeName>
        <fullName evidence="1">Heme synthase</fullName>
    </alternativeName>
    <alternativeName>
        <fullName evidence="1">Protoheme ferro-lyase</fullName>
    </alternativeName>
</protein>
<dbReference type="EC" id="4.98.1.1" evidence="1"/>
<dbReference type="EMBL" id="BA000012">
    <property type="protein sequence ID" value="BAB50005.1"/>
    <property type="molecule type" value="Genomic_DNA"/>
</dbReference>
<dbReference type="RefSeq" id="WP_010911352.1">
    <property type="nucleotide sequence ID" value="NC_002678.2"/>
</dbReference>
<dbReference type="SMR" id="Q98H61"/>
<dbReference type="KEGG" id="mlo:mlr3019"/>
<dbReference type="PATRIC" id="fig|266835.9.peg.2409"/>
<dbReference type="eggNOG" id="COG0276">
    <property type="taxonomic scope" value="Bacteria"/>
</dbReference>
<dbReference type="HOGENOM" id="CLU_018884_0_0_5"/>
<dbReference type="UniPathway" id="UPA00252">
    <property type="reaction ID" value="UER00325"/>
</dbReference>
<dbReference type="Proteomes" id="UP000000552">
    <property type="component" value="Chromosome"/>
</dbReference>
<dbReference type="GO" id="GO:0005737">
    <property type="term" value="C:cytoplasm"/>
    <property type="evidence" value="ECO:0007669"/>
    <property type="project" value="UniProtKB-SubCell"/>
</dbReference>
<dbReference type="GO" id="GO:0004325">
    <property type="term" value="F:ferrochelatase activity"/>
    <property type="evidence" value="ECO:0007669"/>
    <property type="project" value="UniProtKB-UniRule"/>
</dbReference>
<dbReference type="GO" id="GO:0046872">
    <property type="term" value="F:metal ion binding"/>
    <property type="evidence" value="ECO:0007669"/>
    <property type="project" value="UniProtKB-KW"/>
</dbReference>
<dbReference type="GO" id="GO:0006783">
    <property type="term" value="P:heme biosynthetic process"/>
    <property type="evidence" value="ECO:0007669"/>
    <property type="project" value="UniProtKB-UniRule"/>
</dbReference>
<dbReference type="CDD" id="cd00419">
    <property type="entry name" value="Ferrochelatase_C"/>
    <property type="match status" value="1"/>
</dbReference>
<dbReference type="CDD" id="cd03411">
    <property type="entry name" value="Ferrochelatase_N"/>
    <property type="match status" value="1"/>
</dbReference>
<dbReference type="FunFam" id="3.40.50.1400:FF:000002">
    <property type="entry name" value="Ferrochelatase"/>
    <property type="match status" value="1"/>
</dbReference>
<dbReference type="Gene3D" id="3.40.50.1400">
    <property type="match status" value="2"/>
</dbReference>
<dbReference type="HAMAP" id="MF_00323">
    <property type="entry name" value="Ferrochelatase"/>
    <property type="match status" value="1"/>
</dbReference>
<dbReference type="InterPro" id="IPR001015">
    <property type="entry name" value="Ferrochelatase"/>
</dbReference>
<dbReference type="InterPro" id="IPR019772">
    <property type="entry name" value="Ferrochelatase_AS"/>
</dbReference>
<dbReference type="InterPro" id="IPR033644">
    <property type="entry name" value="Ferrochelatase_C"/>
</dbReference>
<dbReference type="InterPro" id="IPR033659">
    <property type="entry name" value="Ferrochelatase_N"/>
</dbReference>
<dbReference type="NCBIfam" id="TIGR00109">
    <property type="entry name" value="hemH"/>
    <property type="match status" value="1"/>
</dbReference>
<dbReference type="PANTHER" id="PTHR11108">
    <property type="entry name" value="FERROCHELATASE"/>
    <property type="match status" value="1"/>
</dbReference>
<dbReference type="PANTHER" id="PTHR11108:SF1">
    <property type="entry name" value="FERROCHELATASE, MITOCHONDRIAL"/>
    <property type="match status" value="1"/>
</dbReference>
<dbReference type="Pfam" id="PF00762">
    <property type="entry name" value="Ferrochelatase"/>
    <property type="match status" value="1"/>
</dbReference>
<dbReference type="SUPFAM" id="SSF53800">
    <property type="entry name" value="Chelatase"/>
    <property type="match status" value="1"/>
</dbReference>
<dbReference type="PROSITE" id="PS00534">
    <property type="entry name" value="FERROCHELATASE"/>
    <property type="match status" value="1"/>
</dbReference>
<proteinExistence type="inferred from homology"/>
<reference key="1">
    <citation type="journal article" date="2000" name="DNA Res.">
        <title>Complete genome structure of the nitrogen-fixing symbiotic bacterium Mesorhizobium loti.</title>
        <authorList>
            <person name="Kaneko T."/>
            <person name="Nakamura Y."/>
            <person name="Sato S."/>
            <person name="Asamizu E."/>
            <person name="Kato T."/>
            <person name="Sasamoto S."/>
            <person name="Watanabe A."/>
            <person name="Idesawa K."/>
            <person name="Ishikawa A."/>
            <person name="Kawashima K."/>
            <person name="Kimura T."/>
            <person name="Kishida Y."/>
            <person name="Kiyokawa C."/>
            <person name="Kohara M."/>
            <person name="Matsumoto M."/>
            <person name="Matsuno A."/>
            <person name="Mochizuki Y."/>
            <person name="Nakayama S."/>
            <person name="Nakazaki N."/>
            <person name="Shimpo S."/>
            <person name="Sugimoto M."/>
            <person name="Takeuchi C."/>
            <person name="Yamada M."/>
            <person name="Tabata S."/>
        </authorList>
    </citation>
    <scope>NUCLEOTIDE SEQUENCE [LARGE SCALE GENOMIC DNA]</scope>
    <source>
        <strain>LMG 29417 / CECT 9101 / MAFF 303099</strain>
    </source>
</reference>